<protein>
    <recommendedName>
        <fullName evidence="1">Small ribosomal subunit protein uS13</fullName>
    </recommendedName>
    <alternativeName>
        <fullName evidence="3">30S ribosomal protein S13</fullName>
    </alternativeName>
</protein>
<feature type="chain" id="PRO_0000306607" description="Small ribosomal subunit protein uS13">
    <location>
        <begin position="1"/>
        <end position="118"/>
    </location>
</feature>
<feature type="region of interest" description="Disordered" evidence="2">
    <location>
        <begin position="91"/>
        <end position="118"/>
    </location>
</feature>
<reference key="1">
    <citation type="journal article" date="2007" name="PLoS ONE">
        <title>Genome sequencing shows that European isolates of Francisella tularensis subspecies tularensis are almost identical to US laboratory strain Schu S4.</title>
        <authorList>
            <person name="Chaudhuri R.R."/>
            <person name="Ren C.-P."/>
            <person name="Desmond L."/>
            <person name="Vincent G.A."/>
            <person name="Silman N.J."/>
            <person name="Brehm J.K."/>
            <person name="Elmore M.J."/>
            <person name="Hudson M.J."/>
            <person name="Forsman M."/>
            <person name="Isherwood K.E."/>
            <person name="Gurycova D."/>
            <person name="Minton N.P."/>
            <person name="Titball R.W."/>
            <person name="Pallen M.J."/>
            <person name="Vipond R."/>
        </authorList>
    </citation>
    <scope>NUCLEOTIDE SEQUENCE [LARGE SCALE GENOMIC DNA]</scope>
    <source>
        <strain>FSC 198</strain>
    </source>
</reference>
<sequence length="118" mass="13378">MARIAGVNIPVHKHTVIGLTSIYGIGKTRAQQICQTCNVDPTVKIKDLSEEQVESLRTEVAKFTVEGDLRREVSMDIKRLMDLGCFRGRRHRRSLPVRGQRTKTNARTRKGPRKPIKA</sequence>
<gene>
    <name evidence="1" type="primary">rpsM</name>
    <name type="ordered locus">FTF0347</name>
</gene>
<accession>Q14J98</accession>
<organism>
    <name type="scientific">Francisella tularensis subsp. tularensis (strain FSC 198)</name>
    <dbReference type="NCBI Taxonomy" id="393115"/>
    <lineage>
        <taxon>Bacteria</taxon>
        <taxon>Pseudomonadati</taxon>
        <taxon>Pseudomonadota</taxon>
        <taxon>Gammaproteobacteria</taxon>
        <taxon>Thiotrichales</taxon>
        <taxon>Francisellaceae</taxon>
        <taxon>Francisella</taxon>
    </lineage>
</organism>
<name>RS13_FRAT1</name>
<comment type="function">
    <text evidence="1">Located at the top of the head of the 30S subunit, it contacts several helices of the 16S rRNA. In the 70S ribosome it contacts the 23S rRNA (bridge B1a) and protein L5 of the 50S subunit (bridge B1b), connecting the 2 subunits; these bridges are implicated in subunit movement. Contacts the tRNAs in the A and P-sites.</text>
</comment>
<comment type="subunit">
    <text evidence="1">Part of the 30S ribosomal subunit. Forms a loose heterodimer with protein S19. Forms two bridges to the 50S subunit in the 70S ribosome.</text>
</comment>
<comment type="similarity">
    <text evidence="1">Belongs to the universal ribosomal protein uS13 family.</text>
</comment>
<evidence type="ECO:0000255" key="1">
    <source>
        <dbReference type="HAMAP-Rule" id="MF_01315"/>
    </source>
</evidence>
<evidence type="ECO:0000256" key="2">
    <source>
        <dbReference type="SAM" id="MobiDB-lite"/>
    </source>
</evidence>
<evidence type="ECO:0000305" key="3"/>
<dbReference type="EMBL" id="AM286280">
    <property type="protein sequence ID" value="CAL08363.1"/>
    <property type="molecule type" value="Genomic_DNA"/>
</dbReference>
<dbReference type="RefSeq" id="WP_003014373.1">
    <property type="nucleotide sequence ID" value="NC_008245.1"/>
</dbReference>
<dbReference type="SMR" id="Q14J98"/>
<dbReference type="GeneID" id="75264239"/>
<dbReference type="KEGG" id="ftf:FTF0347"/>
<dbReference type="HOGENOM" id="CLU_103849_1_2_6"/>
<dbReference type="GO" id="GO:0005829">
    <property type="term" value="C:cytosol"/>
    <property type="evidence" value="ECO:0007669"/>
    <property type="project" value="TreeGrafter"/>
</dbReference>
<dbReference type="GO" id="GO:0015935">
    <property type="term" value="C:small ribosomal subunit"/>
    <property type="evidence" value="ECO:0007669"/>
    <property type="project" value="TreeGrafter"/>
</dbReference>
<dbReference type="GO" id="GO:0019843">
    <property type="term" value="F:rRNA binding"/>
    <property type="evidence" value="ECO:0007669"/>
    <property type="project" value="UniProtKB-UniRule"/>
</dbReference>
<dbReference type="GO" id="GO:0003735">
    <property type="term" value="F:structural constituent of ribosome"/>
    <property type="evidence" value="ECO:0007669"/>
    <property type="project" value="InterPro"/>
</dbReference>
<dbReference type="GO" id="GO:0000049">
    <property type="term" value="F:tRNA binding"/>
    <property type="evidence" value="ECO:0007669"/>
    <property type="project" value="UniProtKB-UniRule"/>
</dbReference>
<dbReference type="GO" id="GO:0006412">
    <property type="term" value="P:translation"/>
    <property type="evidence" value="ECO:0007669"/>
    <property type="project" value="UniProtKB-UniRule"/>
</dbReference>
<dbReference type="FunFam" id="1.10.8.50:FF:000001">
    <property type="entry name" value="30S ribosomal protein S13"/>
    <property type="match status" value="1"/>
</dbReference>
<dbReference type="FunFam" id="4.10.910.10:FF:000001">
    <property type="entry name" value="30S ribosomal protein S13"/>
    <property type="match status" value="1"/>
</dbReference>
<dbReference type="Gene3D" id="1.10.8.50">
    <property type="match status" value="1"/>
</dbReference>
<dbReference type="Gene3D" id="4.10.910.10">
    <property type="entry name" value="30s ribosomal protein s13, domain 2"/>
    <property type="match status" value="1"/>
</dbReference>
<dbReference type="HAMAP" id="MF_01315">
    <property type="entry name" value="Ribosomal_uS13"/>
    <property type="match status" value="1"/>
</dbReference>
<dbReference type="InterPro" id="IPR027437">
    <property type="entry name" value="Rbsml_uS13_C"/>
</dbReference>
<dbReference type="InterPro" id="IPR001892">
    <property type="entry name" value="Ribosomal_uS13"/>
</dbReference>
<dbReference type="InterPro" id="IPR010979">
    <property type="entry name" value="Ribosomal_uS13-like_H2TH"/>
</dbReference>
<dbReference type="InterPro" id="IPR019980">
    <property type="entry name" value="Ribosomal_uS13_bac-type"/>
</dbReference>
<dbReference type="InterPro" id="IPR018269">
    <property type="entry name" value="Ribosomal_uS13_CS"/>
</dbReference>
<dbReference type="NCBIfam" id="TIGR03631">
    <property type="entry name" value="uS13_bact"/>
    <property type="match status" value="1"/>
</dbReference>
<dbReference type="PANTHER" id="PTHR10871">
    <property type="entry name" value="30S RIBOSOMAL PROTEIN S13/40S RIBOSOMAL PROTEIN S18"/>
    <property type="match status" value="1"/>
</dbReference>
<dbReference type="PANTHER" id="PTHR10871:SF1">
    <property type="entry name" value="SMALL RIBOSOMAL SUBUNIT PROTEIN US13M"/>
    <property type="match status" value="1"/>
</dbReference>
<dbReference type="Pfam" id="PF00416">
    <property type="entry name" value="Ribosomal_S13"/>
    <property type="match status" value="1"/>
</dbReference>
<dbReference type="PIRSF" id="PIRSF002134">
    <property type="entry name" value="Ribosomal_S13"/>
    <property type="match status" value="1"/>
</dbReference>
<dbReference type="SUPFAM" id="SSF46946">
    <property type="entry name" value="S13-like H2TH domain"/>
    <property type="match status" value="1"/>
</dbReference>
<dbReference type="PROSITE" id="PS00646">
    <property type="entry name" value="RIBOSOMAL_S13_1"/>
    <property type="match status" value="1"/>
</dbReference>
<dbReference type="PROSITE" id="PS50159">
    <property type="entry name" value="RIBOSOMAL_S13_2"/>
    <property type="match status" value="1"/>
</dbReference>
<proteinExistence type="inferred from homology"/>
<keyword id="KW-0687">Ribonucleoprotein</keyword>
<keyword id="KW-0689">Ribosomal protein</keyword>
<keyword id="KW-0694">RNA-binding</keyword>
<keyword id="KW-0699">rRNA-binding</keyword>
<keyword id="KW-0820">tRNA-binding</keyword>